<dbReference type="EMBL" id="DS027004">
    <property type="protein sequence ID" value="EAW14919.1"/>
    <property type="molecule type" value="Genomic_DNA"/>
</dbReference>
<dbReference type="RefSeq" id="XP_001276345.1">
    <property type="nucleotide sequence ID" value="XM_001276344.1"/>
</dbReference>
<dbReference type="SMR" id="A1C5F1"/>
<dbReference type="STRING" id="344612.A1C5F1"/>
<dbReference type="EnsemblFungi" id="EAW14919">
    <property type="protein sequence ID" value="EAW14919"/>
    <property type="gene ID" value="ACLA_003310"/>
</dbReference>
<dbReference type="GeneID" id="4708462"/>
<dbReference type="KEGG" id="act:ACLA_003310"/>
<dbReference type="VEuPathDB" id="FungiDB:ACLA_003310"/>
<dbReference type="eggNOG" id="KOG1757">
    <property type="taxonomic scope" value="Eukaryota"/>
</dbReference>
<dbReference type="HOGENOM" id="CLU_062828_2_1_1"/>
<dbReference type="OMA" id="MNKKGAP"/>
<dbReference type="OrthoDB" id="9421954at2759"/>
<dbReference type="Proteomes" id="UP000006701">
    <property type="component" value="Unassembled WGS sequence"/>
</dbReference>
<dbReference type="GO" id="GO:0000791">
    <property type="term" value="C:euchromatin"/>
    <property type="evidence" value="ECO:0007669"/>
    <property type="project" value="EnsemblFungi"/>
</dbReference>
<dbReference type="GO" id="GO:0000786">
    <property type="term" value="C:nucleosome"/>
    <property type="evidence" value="ECO:0007669"/>
    <property type="project" value="UniProtKB-KW"/>
</dbReference>
<dbReference type="GO" id="GO:0005634">
    <property type="term" value="C:nucleus"/>
    <property type="evidence" value="ECO:0007669"/>
    <property type="project" value="UniProtKB-SubCell"/>
</dbReference>
<dbReference type="GO" id="GO:0031490">
    <property type="term" value="F:chromatin DNA binding"/>
    <property type="evidence" value="ECO:0007669"/>
    <property type="project" value="EnsemblFungi"/>
</dbReference>
<dbReference type="GO" id="GO:0042802">
    <property type="term" value="F:identical protein binding"/>
    <property type="evidence" value="ECO:0007669"/>
    <property type="project" value="EnsemblFungi"/>
</dbReference>
<dbReference type="GO" id="GO:0046982">
    <property type="term" value="F:protein heterodimerization activity"/>
    <property type="evidence" value="ECO:0007669"/>
    <property type="project" value="InterPro"/>
</dbReference>
<dbReference type="GO" id="GO:0000978">
    <property type="term" value="F:RNA polymerase II cis-regulatory region sequence-specific DNA binding"/>
    <property type="evidence" value="ECO:0007669"/>
    <property type="project" value="EnsemblFungi"/>
</dbReference>
<dbReference type="GO" id="GO:0030527">
    <property type="term" value="F:structural constituent of chromatin"/>
    <property type="evidence" value="ECO:0007669"/>
    <property type="project" value="InterPro"/>
</dbReference>
<dbReference type="GO" id="GO:0140898">
    <property type="term" value="P:CENP-A eviction from euchromatin"/>
    <property type="evidence" value="ECO:0007669"/>
    <property type="project" value="EnsemblFungi"/>
</dbReference>
<dbReference type="GO" id="GO:0070481">
    <property type="term" value="P:nuclear-transcribed mRNA catabolic process, non-stop decay"/>
    <property type="evidence" value="ECO:0007669"/>
    <property type="project" value="EnsemblFungi"/>
</dbReference>
<dbReference type="GO" id="GO:0006357">
    <property type="term" value="P:regulation of transcription by RNA polymerase II"/>
    <property type="evidence" value="ECO:0007669"/>
    <property type="project" value="EnsemblFungi"/>
</dbReference>
<dbReference type="GO" id="GO:0030466">
    <property type="term" value="P:silent mating-type cassette heterochromatin formation"/>
    <property type="evidence" value="ECO:0007669"/>
    <property type="project" value="EnsemblFungi"/>
</dbReference>
<dbReference type="GO" id="GO:0006368">
    <property type="term" value="P:transcription elongation by RNA polymerase II"/>
    <property type="evidence" value="ECO:0007669"/>
    <property type="project" value="EnsemblFungi"/>
</dbReference>
<dbReference type="CDD" id="cd00074">
    <property type="entry name" value="HFD_H2A"/>
    <property type="match status" value="1"/>
</dbReference>
<dbReference type="FunFam" id="1.10.20.10:FF:000021">
    <property type="entry name" value="Histone H2A"/>
    <property type="match status" value="1"/>
</dbReference>
<dbReference type="Gene3D" id="1.10.20.10">
    <property type="entry name" value="Histone, subunit A"/>
    <property type="match status" value="1"/>
</dbReference>
<dbReference type="InterPro" id="IPR009072">
    <property type="entry name" value="Histone-fold"/>
</dbReference>
<dbReference type="InterPro" id="IPR002119">
    <property type="entry name" value="Histone_H2A"/>
</dbReference>
<dbReference type="InterPro" id="IPR007125">
    <property type="entry name" value="Histone_H2A/H2B/H3"/>
</dbReference>
<dbReference type="InterPro" id="IPR032454">
    <property type="entry name" value="Histone_H2A_C"/>
</dbReference>
<dbReference type="PANTHER" id="PTHR23430">
    <property type="entry name" value="HISTONE H2A"/>
    <property type="match status" value="1"/>
</dbReference>
<dbReference type="Pfam" id="PF00125">
    <property type="entry name" value="Histone"/>
    <property type="match status" value="1"/>
</dbReference>
<dbReference type="Pfam" id="PF16211">
    <property type="entry name" value="Histone_H2A_C"/>
    <property type="match status" value="1"/>
</dbReference>
<dbReference type="PRINTS" id="PR00620">
    <property type="entry name" value="HISTONEH2A"/>
</dbReference>
<dbReference type="SMART" id="SM00414">
    <property type="entry name" value="H2A"/>
    <property type="match status" value="1"/>
</dbReference>
<dbReference type="SUPFAM" id="SSF47113">
    <property type="entry name" value="Histone-fold"/>
    <property type="match status" value="1"/>
</dbReference>
<protein>
    <recommendedName>
        <fullName>Histone H2A.Z</fullName>
    </recommendedName>
</protein>
<sequence length="138" mass="14820">MPGGKGKSVGGKAGSKDAAGKTQKSHSAKAGLQFPCGRVKRFLKNNTQNKMRVGAKAAVYVTAVLEYLTAEVLELAGNAAKDLKVKRITPRHLQLAIRGDEELDTLIRATIAFGGVLPRINRALLLKVEQKKKNKSEA</sequence>
<proteinExistence type="inferred from homology"/>
<keyword id="KW-0007">Acetylation</keyword>
<keyword id="KW-0158">Chromosome</keyword>
<keyword id="KW-0238">DNA-binding</keyword>
<keyword id="KW-0544">Nucleosome core</keyword>
<keyword id="KW-0539">Nucleus</keyword>
<keyword id="KW-1185">Reference proteome</keyword>
<name>H2AZ_ASPCL</name>
<evidence type="ECO:0000250" key="1"/>
<evidence type="ECO:0000256" key="2">
    <source>
        <dbReference type="SAM" id="MobiDB-lite"/>
    </source>
</evidence>
<evidence type="ECO:0000305" key="3"/>
<comment type="function">
    <text evidence="1">Variant histone H2A which can replace H2A in some nucleosomes. Nucleosomes wrap and compact DNA into chromatin, limiting DNA accessibility to the cellular machineries which require DNA as a template. Histones thereby play a central role in transcription regulation, DNA repair, DNA replication and chromosomal stability. DNA accessibility is regulated via a complex set of post-translational modifications of histones, also called histone code, and nucleosome remodeling. This variant is enriched at promoters, it may keep them in a repressed state until the appropriate activation signal is received. Near telomeres, it may counteract gene silencing caused by the spread of heterochromatin proteins. Required for the RNA polymerase II and spt15/TBP recruitment to the target genes. Involved in chromosome stability (By similarity).</text>
</comment>
<comment type="subunit">
    <text evidence="1">The nucleosome is a histone octamer containing two molecules each of H2A, H2B, H3 and H4 assembled in one H3-H4 heterotetramer and two H2A-H2B heterodimers. The octamer wraps approximately 147 bp of DNA. H2A or its variant H2A.Z forms a heterodimer with H2B. H2A.Z associates with the vps72/swc2 subunit of the SWR1 chromatin remodeling complex. Also interacts with rbp1/DNA-directed RNA polymerase II largest subunit (By similarity).</text>
</comment>
<comment type="subcellular location">
    <subcellularLocation>
        <location evidence="1">Nucleus</location>
    </subcellularLocation>
    <subcellularLocation>
        <location evidence="1">Chromosome</location>
    </subcellularLocation>
</comment>
<comment type="PTM">
    <text evidence="1">Acetylated once deposited into chromatin.</text>
</comment>
<comment type="similarity">
    <text evidence="3">Belongs to the histone H2A family.</text>
</comment>
<accession>A1C5F1</accession>
<gene>
    <name type="primary">HTZ1</name>
    <name type="ORF">ACLA_003310</name>
</gene>
<organism>
    <name type="scientific">Aspergillus clavatus (strain ATCC 1007 / CBS 513.65 / DSM 816 / NCTC 3887 / NRRL 1 / QM 1276 / 107)</name>
    <dbReference type="NCBI Taxonomy" id="344612"/>
    <lineage>
        <taxon>Eukaryota</taxon>
        <taxon>Fungi</taxon>
        <taxon>Dikarya</taxon>
        <taxon>Ascomycota</taxon>
        <taxon>Pezizomycotina</taxon>
        <taxon>Eurotiomycetes</taxon>
        <taxon>Eurotiomycetidae</taxon>
        <taxon>Eurotiales</taxon>
        <taxon>Aspergillaceae</taxon>
        <taxon>Aspergillus</taxon>
        <taxon>Aspergillus subgen. Fumigati</taxon>
    </lineage>
</organism>
<feature type="chain" id="PRO_0000297717" description="Histone H2A.Z">
    <location>
        <begin position="1"/>
        <end position="138"/>
    </location>
</feature>
<feature type="region of interest" description="Disordered" evidence="2">
    <location>
        <begin position="1"/>
        <end position="32"/>
    </location>
</feature>
<feature type="compositionally biased region" description="Gly residues" evidence="2">
    <location>
        <begin position="1"/>
        <end position="13"/>
    </location>
</feature>
<feature type="modified residue" description="N6-acetyllysine" evidence="1">
    <location>
        <position position="5"/>
    </location>
</feature>
<feature type="modified residue" description="N6-acetyllysine" evidence="1">
    <location>
        <position position="12"/>
    </location>
</feature>
<reference key="1">
    <citation type="journal article" date="2008" name="PLoS Genet.">
        <title>Genomic islands in the pathogenic filamentous fungus Aspergillus fumigatus.</title>
        <authorList>
            <person name="Fedorova N.D."/>
            <person name="Khaldi N."/>
            <person name="Joardar V.S."/>
            <person name="Maiti R."/>
            <person name="Amedeo P."/>
            <person name="Anderson M.J."/>
            <person name="Crabtree J."/>
            <person name="Silva J.C."/>
            <person name="Badger J.H."/>
            <person name="Albarraq A."/>
            <person name="Angiuoli S."/>
            <person name="Bussey H."/>
            <person name="Bowyer P."/>
            <person name="Cotty P.J."/>
            <person name="Dyer P.S."/>
            <person name="Egan A."/>
            <person name="Galens K."/>
            <person name="Fraser-Liggett C.M."/>
            <person name="Haas B.J."/>
            <person name="Inman J.M."/>
            <person name="Kent R."/>
            <person name="Lemieux S."/>
            <person name="Malavazi I."/>
            <person name="Orvis J."/>
            <person name="Roemer T."/>
            <person name="Ronning C.M."/>
            <person name="Sundaram J.P."/>
            <person name="Sutton G."/>
            <person name="Turner G."/>
            <person name="Venter J.C."/>
            <person name="White O.R."/>
            <person name="Whitty B.R."/>
            <person name="Youngman P."/>
            <person name="Wolfe K.H."/>
            <person name="Goldman G.H."/>
            <person name="Wortman J.R."/>
            <person name="Jiang B."/>
            <person name="Denning D.W."/>
            <person name="Nierman W.C."/>
        </authorList>
    </citation>
    <scope>NUCLEOTIDE SEQUENCE [LARGE SCALE GENOMIC DNA]</scope>
    <source>
        <strain>ATCC 1007 / CBS 513.65 / DSM 816 / NCTC 3887 / NRRL 1 / QM 1276 / 107</strain>
    </source>
</reference>